<comment type="function">
    <text>Cytochromes P450 are a group of heme-thiolate monooxygenases. In liver microsomes, this enzyme is involved in an NADPH-dependent electron transport pathway. It oxidizes a variety of structurally unrelated compounds, including steroids, fatty acids, and xenobiotics.</text>
</comment>
<comment type="catalytic activity">
    <reaction>
        <text>an organic molecule + reduced [NADPH--hemoprotein reductase] + O2 = an alcohol + oxidized [NADPH--hemoprotein reductase] + H2O + H(+)</text>
        <dbReference type="Rhea" id="RHEA:17149"/>
        <dbReference type="Rhea" id="RHEA-COMP:11964"/>
        <dbReference type="Rhea" id="RHEA-COMP:11965"/>
        <dbReference type="ChEBI" id="CHEBI:15377"/>
        <dbReference type="ChEBI" id="CHEBI:15378"/>
        <dbReference type="ChEBI" id="CHEBI:15379"/>
        <dbReference type="ChEBI" id="CHEBI:30879"/>
        <dbReference type="ChEBI" id="CHEBI:57618"/>
        <dbReference type="ChEBI" id="CHEBI:58210"/>
        <dbReference type="ChEBI" id="CHEBI:142491"/>
        <dbReference type="EC" id="1.14.14.1"/>
    </reaction>
</comment>
<comment type="cofactor">
    <cofactor evidence="1">
        <name>heme</name>
        <dbReference type="ChEBI" id="CHEBI:30413"/>
    </cofactor>
</comment>
<comment type="subcellular location">
    <subcellularLocation>
        <location>Endoplasmic reticulum membrane</location>
        <topology>Peripheral membrane protein</topology>
    </subcellularLocation>
    <subcellularLocation>
        <location>Microsome membrane</location>
        <topology>Peripheral membrane protein</topology>
    </subcellularLocation>
</comment>
<comment type="induction">
    <text>By phenobarbital.</text>
</comment>
<comment type="similarity">
    <text evidence="2">Belongs to the cytochrome P450 family.</text>
</comment>
<feature type="chain" id="PRO_0000051767" description="Cytochrome P450 2H2">
    <location>
        <begin position="1"/>
        <end position="491"/>
    </location>
</feature>
<feature type="binding site" description="axial binding residue">
    <location>
        <position position="436"/>
    </location>
    <ligand>
        <name>heme</name>
        <dbReference type="ChEBI" id="CHEBI:30413"/>
    </ligand>
    <ligandPart>
        <name>Fe</name>
        <dbReference type="ChEBI" id="CHEBI:18248"/>
    </ligandPart>
</feature>
<evidence type="ECO:0000250" key="1"/>
<evidence type="ECO:0000305" key="2"/>
<organism>
    <name type="scientific">Gallus gallus</name>
    <name type="common">Chicken</name>
    <dbReference type="NCBI Taxonomy" id="9031"/>
    <lineage>
        <taxon>Eukaryota</taxon>
        <taxon>Metazoa</taxon>
        <taxon>Chordata</taxon>
        <taxon>Craniata</taxon>
        <taxon>Vertebrata</taxon>
        <taxon>Euteleostomi</taxon>
        <taxon>Archelosauria</taxon>
        <taxon>Archosauria</taxon>
        <taxon>Dinosauria</taxon>
        <taxon>Saurischia</taxon>
        <taxon>Theropoda</taxon>
        <taxon>Coelurosauria</taxon>
        <taxon>Aves</taxon>
        <taxon>Neognathae</taxon>
        <taxon>Galloanserae</taxon>
        <taxon>Galliformes</taxon>
        <taxon>Phasianidae</taxon>
        <taxon>Phasianinae</taxon>
        <taxon>Gallus</taxon>
    </lineage>
</organism>
<sequence length="491" mass="56485">MDFLGLPTILLLVCISCFLIAAWRSTSQRGKEPPGPTPIPIIGNVFQLNPWDLMESFKELSKKYGPIFTIHLGPKKVVVLYGYDVVKEALIDNGEAFSGRGNLPLFEKVFKGTGIVTSNGESWRQMRRFALTTLRDFGMGKKSIEERIQEEARFLVERIRNTHEKPFNPTVFLMHAVSNIICSTVFGDRFDYEDKKFLDLIEMLDENERYQNRIQTQLYNFFPTILDYLPGPHKTLIKSIETVDDFITEIIRAHQESFDASCPRDFIDAFINKMQQEKENSYFTVESLTRTTLDLFLAGTGTTSTTLRYGLLILLKHPEIEEKMHKEIDRVVGRDRSPCMADRSQLPYTDAVIHEIQRFIDFLPVNLPRAVIKDTKLRDYFIPKDTMIFPLLSPILQDCKEFPNPEKFDPGHFLNANGTFRKSNYFMPFSAGKRICAGEGLARMELFLFLTSILQNFSLKPVKDRKDIDISPIVTSAANIPRPYEVSFIPR</sequence>
<accession>P20678</accession>
<dbReference type="EC" id="1.14.14.1"/>
<dbReference type="EMBL" id="M25469">
    <property type="protein sequence ID" value="AAA48743.1"/>
    <property type="molecule type" value="mRNA"/>
</dbReference>
<dbReference type="PIR" id="A31418">
    <property type="entry name" value="A31418"/>
</dbReference>
<dbReference type="RefSeq" id="NP_001001757.1">
    <property type="nucleotide sequence ID" value="NM_001001757.1"/>
</dbReference>
<dbReference type="SMR" id="P20678"/>
<dbReference type="FunCoup" id="P20678">
    <property type="interactions" value="134"/>
</dbReference>
<dbReference type="STRING" id="9031.ENSGALP00000009294"/>
<dbReference type="GlyGen" id="P20678">
    <property type="glycosylation" value="1 site"/>
</dbReference>
<dbReference type="GeneID" id="414841"/>
<dbReference type="KEGG" id="gga:414841"/>
<dbReference type="CTD" id="414841"/>
<dbReference type="VEuPathDB" id="HostDB:geneid_414841"/>
<dbReference type="InParanoid" id="P20678"/>
<dbReference type="OrthoDB" id="9106286at2759"/>
<dbReference type="PRO" id="PR:P20678"/>
<dbReference type="Proteomes" id="UP000000539">
    <property type="component" value="Unassembled WGS sequence"/>
</dbReference>
<dbReference type="GO" id="GO:0005737">
    <property type="term" value="C:cytoplasm"/>
    <property type="evidence" value="ECO:0000318"/>
    <property type="project" value="GO_Central"/>
</dbReference>
<dbReference type="GO" id="GO:0005789">
    <property type="term" value="C:endoplasmic reticulum membrane"/>
    <property type="evidence" value="ECO:0007669"/>
    <property type="project" value="UniProtKB-SubCell"/>
</dbReference>
<dbReference type="GO" id="GO:0043231">
    <property type="term" value="C:intracellular membrane-bounded organelle"/>
    <property type="evidence" value="ECO:0000318"/>
    <property type="project" value="GO_Central"/>
</dbReference>
<dbReference type="GO" id="GO:0008392">
    <property type="term" value="F:arachidonate epoxygenase activity"/>
    <property type="evidence" value="ECO:0000318"/>
    <property type="project" value="GO_Central"/>
</dbReference>
<dbReference type="GO" id="GO:0020037">
    <property type="term" value="F:heme binding"/>
    <property type="evidence" value="ECO:0000318"/>
    <property type="project" value="GO_Central"/>
</dbReference>
<dbReference type="GO" id="GO:0005506">
    <property type="term" value="F:iron ion binding"/>
    <property type="evidence" value="ECO:0007669"/>
    <property type="project" value="InterPro"/>
</dbReference>
<dbReference type="GO" id="GO:0016712">
    <property type="term" value="F:oxidoreductase activity, acting on paired donors, with incorporation or reduction of molecular oxygen, reduced flavin or flavoprotein as one donor, and incorporation of one atom of oxygen"/>
    <property type="evidence" value="ECO:0000318"/>
    <property type="project" value="GO_Central"/>
</dbReference>
<dbReference type="GO" id="GO:0019373">
    <property type="term" value="P:epoxygenase P450 pathway"/>
    <property type="evidence" value="ECO:0000318"/>
    <property type="project" value="GO_Central"/>
</dbReference>
<dbReference type="GO" id="GO:0006805">
    <property type="term" value="P:xenobiotic metabolic process"/>
    <property type="evidence" value="ECO:0000318"/>
    <property type="project" value="GO_Central"/>
</dbReference>
<dbReference type="CDD" id="cd20665">
    <property type="entry name" value="CYP2C-like"/>
    <property type="match status" value="1"/>
</dbReference>
<dbReference type="FunFam" id="1.10.630.10:FF:000001">
    <property type="entry name" value="Cytochrome P450, family 2"/>
    <property type="match status" value="1"/>
</dbReference>
<dbReference type="Gene3D" id="1.10.630.10">
    <property type="entry name" value="Cytochrome P450"/>
    <property type="match status" value="1"/>
</dbReference>
<dbReference type="InterPro" id="IPR001128">
    <property type="entry name" value="Cyt_P450"/>
</dbReference>
<dbReference type="InterPro" id="IPR017972">
    <property type="entry name" value="Cyt_P450_CS"/>
</dbReference>
<dbReference type="InterPro" id="IPR002401">
    <property type="entry name" value="Cyt_P450_E_grp-I"/>
</dbReference>
<dbReference type="InterPro" id="IPR036396">
    <property type="entry name" value="Cyt_P450_sf"/>
</dbReference>
<dbReference type="InterPro" id="IPR050182">
    <property type="entry name" value="Cytochrome_P450_fam2"/>
</dbReference>
<dbReference type="PANTHER" id="PTHR24300:SF356">
    <property type="entry name" value="CYTOCHROME P450 2E1"/>
    <property type="match status" value="1"/>
</dbReference>
<dbReference type="PANTHER" id="PTHR24300">
    <property type="entry name" value="CYTOCHROME P450 508A4-RELATED"/>
    <property type="match status" value="1"/>
</dbReference>
<dbReference type="Pfam" id="PF00067">
    <property type="entry name" value="p450"/>
    <property type="match status" value="1"/>
</dbReference>
<dbReference type="PRINTS" id="PR00463">
    <property type="entry name" value="EP450I"/>
</dbReference>
<dbReference type="PRINTS" id="PR00385">
    <property type="entry name" value="P450"/>
</dbReference>
<dbReference type="SUPFAM" id="SSF48264">
    <property type="entry name" value="Cytochrome P450"/>
    <property type="match status" value="1"/>
</dbReference>
<dbReference type="PROSITE" id="PS00086">
    <property type="entry name" value="CYTOCHROME_P450"/>
    <property type="match status" value="1"/>
</dbReference>
<protein>
    <recommendedName>
        <fullName>Cytochrome P450 2H2</fullName>
        <ecNumber>1.14.14.1</ecNumber>
    </recommendedName>
    <alternativeName>
        <fullName>CYPIIH2</fullName>
    </alternativeName>
    <alternativeName>
        <fullName>Cytochrome P450 PCHP7</fullName>
    </alternativeName>
</protein>
<gene>
    <name type="primary">CYP2H2</name>
</gene>
<keyword id="KW-0903">Direct protein sequencing</keyword>
<keyword id="KW-0256">Endoplasmic reticulum</keyword>
<keyword id="KW-0349">Heme</keyword>
<keyword id="KW-0408">Iron</keyword>
<keyword id="KW-0472">Membrane</keyword>
<keyword id="KW-0479">Metal-binding</keyword>
<keyword id="KW-0492">Microsome</keyword>
<keyword id="KW-0503">Monooxygenase</keyword>
<keyword id="KW-0560">Oxidoreductase</keyword>
<keyword id="KW-1185">Reference proteome</keyword>
<proteinExistence type="evidence at protein level"/>
<reference key="1">
    <citation type="journal article" date="1989" name="DNA">
        <title>Sequence of a chicken phenobarbital-inducible cytochrome P450 cDNA: regulation of two P450 mRNAs transcribed from different genes.</title>
        <authorList>
            <person name="Hansen A.J."/>
            <person name="May B.K."/>
        </authorList>
    </citation>
    <scope>NUCLEOTIDE SEQUENCE [MRNA]</scope>
</reference>
<reference key="2">
    <citation type="journal article" date="1992" name="J. Biol. Chem.">
        <title>Beta-naphthoflavone induction of a cytochrome P-450 arachidonic acid epoxygenase in chick embryo liver distinct from the aryl hydrocarbon hydroxylase and from phenobarbital-induced arachidonate epoxygenase.</title>
        <authorList>
            <person name="Nakai K."/>
            <person name="Ward A.M."/>
            <person name="Gannon M."/>
            <person name="Rifkind A.B."/>
        </authorList>
    </citation>
    <scope>PROTEIN SEQUENCE OF 1-25</scope>
</reference>
<reference key="3">
    <citation type="journal article" date="1990" name="Biochem. J.">
        <title>Isolation of four forms of acetone-induced cytochrome P-450 in chicken liver by HPLC and their enzymic characterization.</title>
        <authorList>
            <person name="Sinclair J.F."/>
            <person name="Wood S."/>
            <person name="Lambrecht L."/>
            <person name="Gorman N."/>
            <person name="Mende-Mueller L."/>
            <person name="Smith L."/>
            <person name="Hunt J."/>
            <person name="Sinclair P."/>
        </authorList>
    </citation>
    <scope>PROTEIN SEQUENCE OF 1-21</scope>
</reference>
<name>CP2H2_CHICK</name>